<proteinExistence type="evidence at protein level"/>
<reference key="1">
    <citation type="journal article" date="2000" name="Nature">
        <title>Sequence and analysis of chromosome 1 of the plant Arabidopsis thaliana.</title>
        <authorList>
            <person name="Theologis A."/>
            <person name="Ecker J.R."/>
            <person name="Palm C.J."/>
            <person name="Federspiel N.A."/>
            <person name="Kaul S."/>
            <person name="White O."/>
            <person name="Alonso J."/>
            <person name="Altafi H."/>
            <person name="Araujo R."/>
            <person name="Bowman C.L."/>
            <person name="Brooks S.Y."/>
            <person name="Buehler E."/>
            <person name="Chan A."/>
            <person name="Chao Q."/>
            <person name="Chen H."/>
            <person name="Cheuk R.F."/>
            <person name="Chin C.W."/>
            <person name="Chung M.K."/>
            <person name="Conn L."/>
            <person name="Conway A.B."/>
            <person name="Conway A.R."/>
            <person name="Creasy T.H."/>
            <person name="Dewar K."/>
            <person name="Dunn P."/>
            <person name="Etgu P."/>
            <person name="Feldblyum T.V."/>
            <person name="Feng J.-D."/>
            <person name="Fong B."/>
            <person name="Fujii C.Y."/>
            <person name="Gill J.E."/>
            <person name="Goldsmith A.D."/>
            <person name="Haas B."/>
            <person name="Hansen N.F."/>
            <person name="Hughes B."/>
            <person name="Huizar L."/>
            <person name="Hunter J.L."/>
            <person name="Jenkins J."/>
            <person name="Johnson-Hopson C."/>
            <person name="Khan S."/>
            <person name="Khaykin E."/>
            <person name="Kim C.J."/>
            <person name="Koo H.L."/>
            <person name="Kremenetskaia I."/>
            <person name="Kurtz D.B."/>
            <person name="Kwan A."/>
            <person name="Lam B."/>
            <person name="Langin-Hooper S."/>
            <person name="Lee A."/>
            <person name="Lee J.M."/>
            <person name="Lenz C.A."/>
            <person name="Li J.H."/>
            <person name="Li Y.-P."/>
            <person name="Lin X."/>
            <person name="Liu S.X."/>
            <person name="Liu Z.A."/>
            <person name="Luros J.S."/>
            <person name="Maiti R."/>
            <person name="Marziali A."/>
            <person name="Militscher J."/>
            <person name="Miranda M."/>
            <person name="Nguyen M."/>
            <person name="Nierman W.C."/>
            <person name="Osborne B.I."/>
            <person name="Pai G."/>
            <person name="Peterson J."/>
            <person name="Pham P.K."/>
            <person name="Rizzo M."/>
            <person name="Rooney T."/>
            <person name="Rowley D."/>
            <person name="Sakano H."/>
            <person name="Salzberg S.L."/>
            <person name="Schwartz J.R."/>
            <person name="Shinn P."/>
            <person name="Southwick A.M."/>
            <person name="Sun H."/>
            <person name="Tallon L.J."/>
            <person name="Tambunga G."/>
            <person name="Toriumi M.J."/>
            <person name="Town C.D."/>
            <person name="Utterback T."/>
            <person name="Van Aken S."/>
            <person name="Vaysberg M."/>
            <person name="Vysotskaia V.S."/>
            <person name="Walker M."/>
            <person name="Wu D."/>
            <person name="Yu G."/>
            <person name="Fraser C.M."/>
            <person name="Venter J.C."/>
            <person name="Davis R.W."/>
        </authorList>
    </citation>
    <scope>NUCLEOTIDE SEQUENCE [LARGE SCALE GENOMIC DNA]</scope>
    <source>
        <strain>cv. Columbia</strain>
    </source>
</reference>
<reference key="2">
    <citation type="journal article" date="2017" name="Plant J.">
        <title>Araport11: a complete reannotation of the Arabidopsis thaliana reference genome.</title>
        <authorList>
            <person name="Cheng C.Y."/>
            <person name="Krishnakumar V."/>
            <person name="Chan A.P."/>
            <person name="Thibaud-Nissen F."/>
            <person name="Schobel S."/>
            <person name="Town C.D."/>
        </authorList>
    </citation>
    <scope>GENOME REANNOTATION</scope>
    <source>
        <strain>cv. Columbia</strain>
    </source>
</reference>
<reference key="3">
    <citation type="submission" date="2006-08" db="EMBL/GenBank/DDBJ databases">
        <title>Arabidopsis ORF Clones.</title>
        <authorList>
            <person name="Quinitio C."/>
            <person name="Chen H."/>
            <person name="Kim C.J."/>
            <person name="Shinn P."/>
            <person name="Ecker J.R."/>
        </authorList>
    </citation>
    <scope>NUCLEOTIDE SEQUENCE [LARGE SCALE MRNA] (ISOFORM IDD14ALPHA)</scope>
    <source>
        <strain>cv. Columbia</strain>
    </source>
</reference>
<reference key="4">
    <citation type="submission" date="2009-03" db="EMBL/GenBank/DDBJ databases">
        <title>ORF cloning and analysis of Arabidopsis transcription factor genes.</title>
        <authorList>
            <person name="Fujita M."/>
            <person name="Mizukado S."/>
            <person name="Seki M."/>
            <person name="Shinozaki K."/>
            <person name="Mitsuda N."/>
            <person name="Takiguchi Y."/>
            <person name="Takagi M."/>
        </authorList>
    </citation>
    <scope>NUCLEOTIDE SEQUENCE [LARGE SCALE MRNA] (ISOFORM IDD14ALPHA)</scope>
</reference>
<reference key="5">
    <citation type="journal article" date="2006" name="BMC Genomics">
        <title>The maize INDETERMINATE1 flowering time regulator defines a highly conserved zinc finger protein family in higher plants.</title>
        <authorList>
            <person name="Colasanti J."/>
            <person name="Tremblay R."/>
            <person name="Wong A.Y."/>
            <person name="Coneva V."/>
            <person name="Kozaki A."/>
            <person name="Mable B.K."/>
        </authorList>
    </citation>
    <scope>GENE FAMILY</scope>
    <scope>NOMENCLATURE</scope>
</reference>
<reference key="6">
    <citation type="journal article" date="2011" name="Nat. Commun.">
        <title>Two splice variants of the IDD14 transcription factor competitively form nonfunctional heterodimers which may regulate starch metabolism.</title>
        <authorList>
            <person name="Seo P.J."/>
            <person name="Kim M.J."/>
            <person name="Ryu J.Y."/>
            <person name="Jeong E.Y."/>
            <person name="Park C.M."/>
        </authorList>
    </citation>
    <scope>FUNCTION</scope>
    <scope>ALTERNATIVE SPLICING</scope>
    <scope>SUBUNIT</scope>
    <scope>DISRUPTION PHENOTYPE</scope>
    <scope>DOMAIN</scope>
    <scope>SUBCELLULAR LOCATION</scope>
    <source>
        <strain>cv. Columbia</strain>
    </source>
</reference>
<reference key="7">
    <citation type="journal article" date="2013" name="PLoS Genet.">
        <title>The arabidopsis IDD14, IDD15, and IDD16 cooperatively regulate lateral organ morphogenesis and gravitropism by promoting auxin biosynthesis and transport.</title>
        <authorList>
            <person name="Cui D."/>
            <person name="Zhao J."/>
            <person name="Jing Y."/>
            <person name="Fan M."/>
            <person name="Liu J."/>
            <person name="Wang Z."/>
            <person name="Xin W."/>
            <person name="Hu Y."/>
        </authorList>
    </citation>
    <scope>FUNCTION</scope>
    <scope>TISSUE SPECIFICITY</scope>
    <scope>SUBCELLULAR LOCATION</scope>
    <scope>DISRUPTION PHENOTYPE</scope>
    <scope>INDUCTION BY AUXIN</scope>
</reference>
<organism>
    <name type="scientific">Arabidopsis thaliana</name>
    <name type="common">Mouse-ear cress</name>
    <dbReference type="NCBI Taxonomy" id="3702"/>
    <lineage>
        <taxon>Eukaryota</taxon>
        <taxon>Viridiplantae</taxon>
        <taxon>Streptophyta</taxon>
        <taxon>Embryophyta</taxon>
        <taxon>Tracheophyta</taxon>
        <taxon>Spermatophyta</taxon>
        <taxon>Magnoliopsida</taxon>
        <taxon>eudicotyledons</taxon>
        <taxon>Gunneridae</taxon>
        <taxon>Pentapetalae</taxon>
        <taxon>rosids</taxon>
        <taxon>malvids</taxon>
        <taxon>Brassicales</taxon>
        <taxon>Brassicaceae</taxon>
        <taxon>Camelineae</taxon>
        <taxon>Arabidopsis</taxon>
    </lineage>
</organism>
<keyword id="KW-0025">Alternative splicing</keyword>
<keyword id="KW-0175">Coiled coil</keyword>
<keyword id="KW-0238">DNA-binding</keyword>
<keyword id="KW-0479">Metal-binding</keyword>
<keyword id="KW-0539">Nucleus</keyword>
<keyword id="KW-1185">Reference proteome</keyword>
<keyword id="KW-0677">Repeat</keyword>
<keyword id="KW-0804">Transcription</keyword>
<keyword id="KW-0805">Transcription regulation</keyword>
<keyword id="KW-0862">Zinc</keyword>
<keyword id="KW-0863">Zinc-finger</keyword>
<sequence length="419" mass="47558">MIDYERSNTTKNINTHHHNPPPSSSSSDLLPDGNGTAVTQKRKRRPAGTPDPEAEVVSLSPRTLLESDRYVCEICNQGFQRDQNLQMHRRRHKVPWKLLKRETNEEVRKRVYVCPEPTCLHHNPCHALGDLVGIKKHFRRKHSNHKQWICERCSKGYAVQSDYKAHLKTCGTRGHSCDCGRVFSRVESFIEHQDTCTVRRSQPSNHRLHEQQQHTTNATQTASTAENNENGDLSIGPILPGHPLQRRQSPPSEQQPSTLLYPFVTNGSIELQLLPSRNCADETSLSLSIGTMDQKTMSEVEKKSYEKGETSLEREEARRETKRQIEIAELEFAEAKRIRQHARAELHKAHLFREEASRRISATMMQITCHNCKQHFQAPAALVPPPPQTHCTDESTSLAVSYMSSATTEGEKASDRASS</sequence>
<accession>Q9C9X7</accession>
<accession>A8MRJ3</accession>
<protein>
    <recommendedName>
        <fullName evidence="7">Protein indeterminate-domain 14</fullName>
        <shortName evidence="7">AtIDD14</shortName>
    </recommendedName>
    <alternativeName>
        <fullName evidence="7">Transcriptional regulator of starch metabolism IDD14</fullName>
    </alternativeName>
</protein>
<dbReference type="EMBL" id="AC012563">
    <property type="protein sequence ID" value="AAG51998.1"/>
    <property type="molecule type" value="Genomic_DNA"/>
</dbReference>
<dbReference type="EMBL" id="CP002684">
    <property type="protein sequence ID" value="AEE34752.1"/>
    <property type="molecule type" value="Genomic_DNA"/>
</dbReference>
<dbReference type="EMBL" id="CP002684">
    <property type="protein sequence ID" value="AEE34753.1"/>
    <property type="molecule type" value="Genomic_DNA"/>
</dbReference>
<dbReference type="EMBL" id="BT026478">
    <property type="protein sequence ID" value="ABH04585.1"/>
    <property type="molecule type" value="mRNA"/>
</dbReference>
<dbReference type="EMBL" id="AB493524">
    <property type="protein sequence ID" value="BAH30362.1"/>
    <property type="molecule type" value="mRNA"/>
</dbReference>
<dbReference type="PIR" id="F96704">
    <property type="entry name" value="F96704"/>
</dbReference>
<dbReference type="RefSeq" id="NP_001077791.1">
    <molecule id="Q9C9X7-2"/>
    <property type="nucleotide sequence ID" value="NM_001084322.2"/>
</dbReference>
<dbReference type="RefSeq" id="NP_176980.1">
    <molecule id="Q9C9X7-1"/>
    <property type="nucleotide sequence ID" value="NM_105483.4"/>
</dbReference>
<dbReference type="FunCoup" id="Q9C9X7">
    <property type="interactions" value="667"/>
</dbReference>
<dbReference type="IntAct" id="Q9C9X7">
    <property type="interactions" value="9"/>
</dbReference>
<dbReference type="STRING" id="3702.Q9C9X7"/>
<dbReference type="iPTMnet" id="Q9C9X7"/>
<dbReference type="PaxDb" id="3702-AT1G68130.1"/>
<dbReference type="ProteomicsDB" id="228779">
    <molecule id="Q9C9X7-1"/>
</dbReference>
<dbReference type="EnsemblPlants" id="AT1G68130.1">
    <molecule id="Q9C9X7-1"/>
    <property type="protein sequence ID" value="AT1G68130.1"/>
    <property type="gene ID" value="AT1G68130"/>
</dbReference>
<dbReference type="EnsemblPlants" id="AT1G68130.2">
    <molecule id="Q9C9X7-2"/>
    <property type="protein sequence ID" value="AT1G68130.2"/>
    <property type="gene ID" value="AT1G68130"/>
</dbReference>
<dbReference type="GeneID" id="843141"/>
<dbReference type="Gramene" id="AT1G68130.1">
    <molecule id="Q9C9X7-1"/>
    <property type="protein sequence ID" value="AT1G68130.1"/>
    <property type="gene ID" value="AT1G68130"/>
</dbReference>
<dbReference type="Gramene" id="AT1G68130.2">
    <molecule id="Q9C9X7-2"/>
    <property type="protein sequence ID" value="AT1G68130.2"/>
    <property type="gene ID" value="AT1G68130"/>
</dbReference>
<dbReference type="KEGG" id="ath:AT1G68130"/>
<dbReference type="Araport" id="AT1G68130"/>
<dbReference type="TAIR" id="AT1G68130">
    <property type="gene designation" value="IDD14"/>
</dbReference>
<dbReference type="eggNOG" id="KOG1721">
    <property type="taxonomic scope" value="Eukaryota"/>
</dbReference>
<dbReference type="HOGENOM" id="CLU_014578_0_1_1"/>
<dbReference type="InParanoid" id="Q9C9X7"/>
<dbReference type="OMA" id="INTHHHN"/>
<dbReference type="PhylomeDB" id="Q9C9X7"/>
<dbReference type="PRO" id="PR:Q9C9X7"/>
<dbReference type="Proteomes" id="UP000006548">
    <property type="component" value="Chromosome 1"/>
</dbReference>
<dbReference type="ExpressionAtlas" id="Q9C9X7">
    <property type="expression patterns" value="baseline and differential"/>
</dbReference>
<dbReference type="GO" id="GO:0005634">
    <property type="term" value="C:nucleus"/>
    <property type="evidence" value="ECO:0000314"/>
    <property type="project" value="TAIR"/>
</dbReference>
<dbReference type="GO" id="GO:0003700">
    <property type="term" value="F:DNA-binding transcription factor activity"/>
    <property type="evidence" value="ECO:0000314"/>
    <property type="project" value="TAIR"/>
</dbReference>
<dbReference type="GO" id="GO:0000976">
    <property type="term" value="F:transcription cis-regulatory region binding"/>
    <property type="evidence" value="ECO:0000314"/>
    <property type="project" value="TAIR"/>
</dbReference>
<dbReference type="GO" id="GO:0008270">
    <property type="term" value="F:zinc ion binding"/>
    <property type="evidence" value="ECO:0007669"/>
    <property type="project" value="UniProtKB-KW"/>
</dbReference>
<dbReference type="GO" id="GO:0048444">
    <property type="term" value="P:floral organ morphogenesis"/>
    <property type="evidence" value="ECO:0000316"/>
    <property type="project" value="TAIR"/>
</dbReference>
<dbReference type="GO" id="GO:0009630">
    <property type="term" value="P:gravitropism"/>
    <property type="evidence" value="ECO:0000316"/>
    <property type="project" value="TAIR"/>
</dbReference>
<dbReference type="GO" id="GO:0009965">
    <property type="term" value="P:leaf morphogenesis"/>
    <property type="evidence" value="ECO:0000316"/>
    <property type="project" value="TAIR"/>
</dbReference>
<dbReference type="GO" id="GO:0010601">
    <property type="term" value="P:positive regulation of auxin biosynthetic process"/>
    <property type="evidence" value="ECO:0000316"/>
    <property type="project" value="TAIR"/>
</dbReference>
<dbReference type="GO" id="GO:2000012">
    <property type="term" value="P:regulation of auxin polar transport"/>
    <property type="evidence" value="ECO:0000316"/>
    <property type="project" value="TAIR"/>
</dbReference>
<dbReference type="GO" id="GO:0006355">
    <property type="term" value="P:regulation of DNA-templated transcription"/>
    <property type="evidence" value="ECO:0000304"/>
    <property type="project" value="TAIR"/>
</dbReference>
<dbReference type="GO" id="GO:2000904">
    <property type="term" value="P:regulation of starch metabolic process"/>
    <property type="evidence" value="ECO:0000315"/>
    <property type="project" value="TAIR"/>
</dbReference>
<dbReference type="FunFam" id="3.30.160.60:FF:000554">
    <property type="entry name" value="protein indeterminate-domain 12-like"/>
    <property type="match status" value="1"/>
</dbReference>
<dbReference type="Gene3D" id="3.30.160.60">
    <property type="entry name" value="Classic Zinc Finger"/>
    <property type="match status" value="1"/>
</dbReference>
<dbReference type="InterPro" id="IPR055187">
    <property type="entry name" value="C2CH-3rd_BIRD-IDD"/>
</dbReference>
<dbReference type="InterPro" id="IPR055185">
    <property type="entry name" value="C2CH-4th_BIRD-IDD"/>
</dbReference>
<dbReference type="InterPro" id="IPR055186">
    <property type="entry name" value="C2H2-2nd_BIRD-IDD"/>
</dbReference>
<dbReference type="InterPro" id="IPR031140">
    <property type="entry name" value="IDD1-16"/>
</dbReference>
<dbReference type="InterPro" id="IPR036236">
    <property type="entry name" value="Znf_C2H2_sf"/>
</dbReference>
<dbReference type="InterPro" id="IPR013087">
    <property type="entry name" value="Znf_C2H2_type"/>
</dbReference>
<dbReference type="PANTHER" id="PTHR10593:SF221">
    <property type="entry name" value="PROTEIN INDETERMINATE-DOMAIN 14"/>
    <property type="match status" value="1"/>
</dbReference>
<dbReference type="PANTHER" id="PTHR10593">
    <property type="entry name" value="SERINE/THREONINE-PROTEIN KINASE RIO"/>
    <property type="match status" value="1"/>
</dbReference>
<dbReference type="Pfam" id="PF22995">
    <property type="entry name" value="C2CH-3rd_BIRD-IDD"/>
    <property type="match status" value="1"/>
</dbReference>
<dbReference type="Pfam" id="PF22992">
    <property type="entry name" value="C2CH-4th_BIRD-IDD"/>
    <property type="match status" value="1"/>
</dbReference>
<dbReference type="Pfam" id="PF22996">
    <property type="entry name" value="C2H2-2nd_BIRD-IDD"/>
    <property type="match status" value="1"/>
</dbReference>
<dbReference type="Pfam" id="PF00096">
    <property type="entry name" value="zf-C2H2"/>
    <property type="match status" value="1"/>
</dbReference>
<dbReference type="SMART" id="SM00355">
    <property type="entry name" value="ZnF_C2H2"/>
    <property type="match status" value="3"/>
</dbReference>
<dbReference type="SUPFAM" id="SSF57667">
    <property type="entry name" value="beta-beta-alpha zinc fingers"/>
    <property type="match status" value="1"/>
</dbReference>
<dbReference type="PROSITE" id="PS00028">
    <property type="entry name" value="ZINC_FINGER_C2H2_1"/>
    <property type="match status" value="1"/>
</dbReference>
<dbReference type="PROSITE" id="PS50157">
    <property type="entry name" value="ZINC_FINGER_C2H2_2"/>
    <property type="match status" value="1"/>
</dbReference>
<name>IDD14_ARATH</name>
<feature type="chain" id="PRO_0000431548" description="Protein indeterminate-domain 14">
    <location>
        <begin position="1"/>
        <end position="419"/>
    </location>
</feature>
<feature type="zinc finger region" description="C2H2-type 1" evidence="3">
    <location>
        <begin position="70"/>
        <end position="92"/>
    </location>
</feature>
<feature type="zinc finger region" description="C2H2-type 2" evidence="8">
    <location>
        <begin position="112"/>
        <end position="142"/>
    </location>
</feature>
<feature type="zinc finger region" description="C2H2-type 2" evidence="3">
    <location>
        <begin position="148"/>
        <end position="175"/>
    </location>
</feature>
<feature type="zinc finger region" description="CCHC-type 2; atypical" evidence="8">
    <location>
        <begin position="175"/>
        <end position="198"/>
    </location>
</feature>
<feature type="region of interest" description="Disordered" evidence="4">
    <location>
        <begin position="1"/>
        <end position="58"/>
    </location>
</feature>
<feature type="region of interest" description="SHR-binding" evidence="1">
    <location>
        <begin position="185"/>
        <end position="197"/>
    </location>
</feature>
<feature type="region of interest" description="Disordered" evidence="4">
    <location>
        <begin position="200"/>
        <end position="259"/>
    </location>
</feature>
<feature type="region of interest" description="Disordered" evidence="4">
    <location>
        <begin position="298"/>
        <end position="318"/>
    </location>
</feature>
<feature type="coiled-coil region" evidence="2">
    <location>
        <begin position="313"/>
        <end position="349"/>
    </location>
</feature>
<feature type="compositionally biased region" description="Low complexity" evidence="4">
    <location>
        <begin position="213"/>
        <end position="230"/>
    </location>
</feature>
<feature type="compositionally biased region" description="Low complexity" evidence="4">
    <location>
        <begin position="246"/>
        <end position="259"/>
    </location>
</feature>
<feature type="binding site" evidence="1">
    <location>
        <position position="150"/>
    </location>
    <ligand>
        <name>Zn(2+)</name>
        <dbReference type="ChEBI" id="CHEBI:29105"/>
        <label>1</label>
    </ligand>
</feature>
<feature type="binding site" evidence="1">
    <location>
        <position position="153"/>
    </location>
    <ligand>
        <name>Zn(2+)</name>
        <dbReference type="ChEBI" id="CHEBI:29105"/>
        <label>1</label>
    </ligand>
</feature>
<feature type="binding site" evidence="1">
    <location>
        <position position="166"/>
    </location>
    <ligand>
        <name>Zn(2+)</name>
        <dbReference type="ChEBI" id="CHEBI:29105"/>
        <label>1</label>
    </ligand>
</feature>
<feature type="binding site" evidence="1">
    <location>
        <position position="170"/>
    </location>
    <ligand>
        <name>Zn(2+)</name>
        <dbReference type="ChEBI" id="CHEBI:29105"/>
        <label>1</label>
    </ligand>
</feature>
<feature type="binding site" evidence="1">
    <location>
        <position position="177"/>
    </location>
    <ligand>
        <name>Zn(2+)</name>
        <dbReference type="ChEBI" id="CHEBI:29105"/>
        <label>2</label>
    </ligand>
</feature>
<feature type="binding site" evidence="1">
    <location>
        <position position="179"/>
    </location>
    <ligand>
        <name>Zn(2+)</name>
        <dbReference type="ChEBI" id="CHEBI:29105"/>
        <label>2</label>
    </ligand>
</feature>
<feature type="binding site" evidence="1">
    <location>
        <position position="192"/>
    </location>
    <ligand>
        <name>Zn(2+)</name>
        <dbReference type="ChEBI" id="CHEBI:29105"/>
        <label>2</label>
    </ligand>
</feature>
<feature type="binding site" evidence="1">
    <location>
        <position position="196"/>
    </location>
    <ligand>
        <name>Zn(2+)</name>
        <dbReference type="ChEBI" id="CHEBI:29105"/>
        <label>2</label>
    </ligand>
</feature>
<feature type="splice variant" id="VSP_057332" description="In isoform IDD14beta.">
    <location>
        <begin position="1"/>
        <end position="86"/>
    </location>
</feature>
<gene>
    <name evidence="7" type="primary">IDD14</name>
    <name evidence="9" type="ordered locus">At1g68130</name>
    <name evidence="10" type="ORF">T23K23.2</name>
</gene>
<comment type="function">
    <text evidence="5 6">Transcription factor regulating starch metabolism by binding directly to the promoter of QQS (PubMed:21556057). The IDD14beta isoform attenuates the transcription factor activity by competitively forming heterodimers with reduced DNA-binding capacity (PubMed:21556057). Regulates lateral organ morphogenesis and gravitropic responses (PubMed:24039602). Has a redundant role with IDD16 in directing leaf and floral organ morphogenesis (PubMed:24039602). Involved in the establishment of auxin gradients through the regulation of auxin biosynthesis and transport (PubMed:24039602).</text>
</comment>
<comment type="subunit">
    <text evidence="5">Homo- and heterodimer of IDD14alpha and IDD14beta.</text>
</comment>
<comment type="interaction">
    <interactant intactId="EBI-15191579">
        <id>Q9C9X7</id>
    </interactant>
    <interactant intactId="EBI-15191535">
        <id>O80748</id>
        <label>BBX26</label>
    </interactant>
    <organismsDiffer>false</organismsDiffer>
    <experiments>3</experiments>
</comment>
<comment type="interaction">
    <interactant intactId="EBI-15191579">
        <id>Q9C9X7</id>
    </interactant>
    <interactant intactId="EBI-4426649">
        <id>Q17TI5</id>
        <label>BRX</label>
    </interactant>
    <organismsDiffer>false</organismsDiffer>
    <experiments>3</experiments>
</comment>
<comment type="interaction">
    <interactant intactId="EBI-15191579">
        <id>Q9C9X7</id>
    </interactant>
    <interactant intactId="EBI-2349513">
        <id>Q84MC7</id>
        <label>PYL9</label>
    </interactant>
    <organismsDiffer>false</organismsDiffer>
    <experiments>3</experiments>
</comment>
<comment type="interaction">
    <interactant intactId="EBI-15191579">
        <id>Q9C9X7</id>
    </interactant>
    <interactant intactId="EBI-15192881">
        <id>F4IPE3</id>
        <label>SGR5</label>
    </interactant>
    <organismsDiffer>false</organismsDiffer>
    <experiments>5</experiments>
</comment>
<comment type="interaction">
    <interactant intactId="EBI-15191579">
        <id>Q9C9X7</id>
    </interactant>
    <interactant intactId="EBI-1113627">
        <id>O22152</id>
        <label>YAB1</label>
    </interactant>
    <organismsDiffer>false</organismsDiffer>
    <experiments>4</experiments>
</comment>
<comment type="interaction">
    <interactant intactId="EBI-15191579">
        <id>Q9C9X7</id>
    </interactant>
    <interactant intactId="EBI-1115523">
        <id>Q9LDT3</id>
        <label>YAB4</label>
    </interactant>
    <organismsDiffer>false</organismsDiffer>
    <experiments>3</experiments>
</comment>
<comment type="subcellular location">
    <subcellularLocation>
        <location evidence="5 6">Nucleus</location>
    </subcellularLocation>
</comment>
<comment type="alternative products">
    <event type="alternative splicing"/>
    <isoform>
        <id>Q9C9X7-1</id>
        <name>IDD14alpha</name>
        <sequence type="displayed"/>
    </isoform>
    <isoform>
        <id>Q9C9X7-2</id>
        <name>IDD14beta</name>
        <sequence type="described" ref="VSP_057332"/>
    </isoform>
</comment>
<comment type="tissue specificity">
    <text evidence="6">Expressed in cotyledons and the vasculature of reosette leaves. Weak expression in hypocotyls and floral organs, but not detected in roots and inflorescence stems.</text>
</comment>
<comment type="induction">
    <text evidence="6">Not regulated by auxin.</text>
</comment>
<comment type="domain">
    <text evidence="5">The coiled-coil domain (311-350) is involved in dimerization.</text>
</comment>
<comment type="disruption phenotype">
    <text evidence="5 6">No visible phenotype (PubMed:24039602). Accelerated growth and slightly early flowering (PubMed:21556057).</text>
</comment>
<comment type="miscellaneous">
    <molecule>Isoform IDD14beta</molecule>
    <text evidence="5">Lacks a functional DNA-binding domain. Induced under cold conditions.</text>
</comment>
<evidence type="ECO:0000250" key="1">
    <source>
        <dbReference type="UniProtKB" id="Q700D2"/>
    </source>
</evidence>
<evidence type="ECO:0000255" key="2"/>
<evidence type="ECO:0000255" key="3">
    <source>
        <dbReference type="PROSITE-ProRule" id="PRU00042"/>
    </source>
</evidence>
<evidence type="ECO:0000256" key="4">
    <source>
        <dbReference type="SAM" id="MobiDB-lite"/>
    </source>
</evidence>
<evidence type="ECO:0000269" key="5">
    <source>
    </source>
</evidence>
<evidence type="ECO:0000269" key="6">
    <source>
    </source>
</evidence>
<evidence type="ECO:0000303" key="7">
    <source>
    </source>
</evidence>
<evidence type="ECO:0000305" key="8"/>
<evidence type="ECO:0000312" key="9">
    <source>
        <dbReference type="Araport" id="AT1G68130"/>
    </source>
</evidence>
<evidence type="ECO:0000312" key="10">
    <source>
        <dbReference type="EMBL" id="AAG51998.1"/>
    </source>
</evidence>